<keyword id="KW-0150">Chloroplast</keyword>
<keyword id="KW-0472">Membrane</keyword>
<keyword id="KW-0602">Photosynthesis</keyword>
<keyword id="KW-0604">Photosystem II</keyword>
<keyword id="KW-0934">Plastid</keyword>
<keyword id="KW-0674">Reaction center</keyword>
<keyword id="KW-0793">Thylakoid</keyword>
<keyword id="KW-0812">Transmembrane</keyword>
<keyword id="KW-1133">Transmembrane helix</keyword>
<dbReference type="EMBL" id="AJ271079">
    <property type="protein sequence ID" value="CAB67162.1"/>
    <property type="molecule type" value="Genomic_DNA"/>
</dbReference>
<dbReference type="RefSeq" id="NP_084697.1">
    <property type="nucleotide sequence ID" value="NC_002693.2"/>
</dbReference>
<dbReference type="SMR" id="Q9MTL6"/>
<dbReference type="GeneID" id="802820"/>
<dbReference type="GO" id="GO:0009535">
    <property type="term" value="C:chloroplast thylakoid membrane"/>
    <property type="evidence" value="ECO:0007669"/>
    <property type="project" value="UniProtKB-SubCell"/>
</dbReference>
<dbReference type="GO" id="GO:0009539">
    <property type="term" value="C:photosystem II reaction center"/>
    <property type="evidence" value="ECO:0007669"/>
    <property type="project" value="InterPro"/>
</dbReference>
<dbReference type="GO" id="GO:0015979">
    <property type="term" value="P:photosynthesis"/>
    <property type="evidence" value="ECO:0007669"/>
    <property type="project" value="UniProtKB-UniRule"/>
</dbReference>
<dbReference type="HAMAP" id="MF_00441">
    <property type="entry name" value="PSII_PsbK"/>
    <property type="match status" value="1"/>
</dbReference>
<dbReference type="InterPro" id="IPR003687">
    <property type="entry name" value="PSII_PsbK"/>
</dbReference>
<dbReference type="InterPro" id="IPR037270">
    <property type="entry name" value="PSII_PsbK_sf"/>
</dbReference>
<dbReference type="NCBIfam" id="NF002715">
    <property type="entry name" value="PRK02553.1"/>
    <property type="match status" value="1"/>
</dbReference>
<dbReference type="PANTHER" id="PTHR35325">
    <property type="match status" value="1"/>
</dbReference>
<dbReference type="PANTHER" id="PTHR35325:SF1">
    <property type="entry name" value="PHOTOSYSTEM II REACTION CENTER PROTEIN K"/>
    <property type="match status" value="1"/>
</dbReference>
<dbReference type="Pfam" id="PF02533">
    <property type="entry name" value="PsbK"/>
    <property type="match status" value="1"/>
</dbReference>
<dbReference type="SUPFAM" id="SSF161037">
    <property type="entry name" value="Photosystem II reaction center protein K, PsbK"/>
    <property type="match status" value="1"/>
</dbReference>
<reference key="1">
    <citation type="journal article" date="2000" name="Mol. Gen. Genet.">
        <title>Complete nucleotide sequence of the Oenothera elata plastid chromosome, representing plastome I of the five distinguishable Euoenothera plastomes.</title>
        <authorList>
            <person name="Hupfer H."/>
            <person name="Swiatek M."/>
            <person name="Hornung S."/>
            <person name="Herrmann R.G."/>
            <person name="Maier R.M."/>
            <person name="Chiu W.-L."/>
            <person name="Sears B."/>
        </authorList>
    </citation>
    <scope>NUCLEOTIDE SEQUENCE [LARGE SCALE GENOMIC DNA]</scope>
    <source>
        <strain>cv. Johansen</strain>
    </source>
</reference>
<comment type="function">
    <text evidence="1">One of the components of the core complex of photosystem II (PSII). PSII is a light-driven water:plastoquinone oxidoreductase that uses light energy to abstract electrons from H(2)O, generating O(2) and a proton gradient subsequently used for ATP formation. It consists of a core antenna complex that captures photons, and an electron transfer chain that converts photonic excitation into a charge separation.</text>
</comment>
<comment type="subunit">
    <text evidence="1">PSII is composed of 1 copy each of membrane proteins PsbA, PsbB, PsbC, PsbD, PsbE, PsbF, PsbH, PsbI, PsbJ, PsbK, PsbL, PsbM, PsbT, PsbX, PsbY, PsbZ, Psb30/Ycf12, at least 3 peripheral proteins of the oxygen-evolving complex and a large number of cofactors. It forms dimeric complexes.</text>
</comment>
<comment type="subcellular location">
    <subcellularLocation>
        <location evidence="1">Plastid</location>
        <location evidence="1">Chloroplast thylakoid membrane</location>
        <topology evidence="1">Single-pass membrane protein</topology>
    </subcellularLocation>
</comment>
<comment type="similarity">
    <text evidence="1">Belongs to the PsbK family.</text>
</comment>
<accession>Q9MTL6</accession>
<feature type="propeptide" id="PRO_0000029497" evidence="1">
    <location>
        <begin position="1"/>
        <end position="22"/>
    </location>
</feature>
<feature type="chain" id="PRO_0000029498" description="Photosystem II reaction center protein K" evidence="1">
    <location>
        <begin position="23"/>
        <end position="59"/>
    </location>
</feature>
<feature type="transmembrane region" description="Helical" evidence="1">
    <location>
        <begin position="38"/>
        <end position="58"/>
    </location>
</feature>
<gene>
    <name evidence="1" type="primary">psbK</name>
</gene>
<name>PSBK_OENEH</name>
<evidence type="ECO:0000255" key="1">
    <source>
        <dbReference type="HAMAP-Rule" id="MF_00441"/>
    </source>
</evidence>
<geneLocation type="chloroplast"/>
<proteinExistence type="inferred from homology"/>
<sequence length="59" mass="6787">MLNIFSLICLNSDLYSSRFFLAKLPEAYAFLNPIVDVMPVIPLFFLLLAFVWQAAVSFR</sequence>
<protein>
    <recommendedName>
        <fullName evidence="1">Photosystem II reaction center protein K</fullName>
        <shortName evidence="1">PSII-K</shortName>
    </recommendedName>
</protein>
<organism>
    <name type="scientific">Oenothera elata subsp. hookeri</name>
    <name type="common">Hooker's evening primrose</name>
    <name type="synonym">Oenothera hookeri</name>
    <dbReference type="NCBI Taxonomy" id="85636"/>
    <lineage>
        <taxon>Eukaryota</taxon>
        <taxon>Viridiplantae</taxon>
        <taxon>Streptophyta</taxon>
        <taxon>Embryophyta</taxon>
        <taxon>Tracheophyta</taxon>
        <taxon>Spermatophyta</taxon>
        <taxon>Magnoliopsida</taxon>
        <taxon>eudicotyledons</taxon>
        <taxon>Gunneridae</taxon>
        <taxon>Pentapetalae</taxon>
        <taxon>rosids</taxon>
        <taxon>malvids</taxon>
        <taxon>Myrtales</taxon>
        <taxon>Onagraceae</taxon>
        <taxon>Onagroideae</taxon>
        <taxon>Onagreae</taxon>
        <taxon>Oenothera</taxon>
    </lineage>
</organism>